<comment type="similarity">
    <text evidence="1">Belongs to the small heat shock protein (HSP20) family.</text>
</comment>
<proteinExistence type="inferred from homology"/>
<dbReference type="EMBL" id="AAFI02000015">
    <property type="protein sequence ID" value="EAL69150.1"/>
    <property type="molecule type" value="Genomic_DNA"/>
</dbReference>
<dbReference type="RefSeq" id="XP_643076.1">
    <property type="nucleotide sequence ID" value="XM_637984.1"/>
</dbReference>
<dbReference type="STRING" id="44689.Q551G1"/>
<dbReference type="PaxDb" id="44689-DDB0232133"/>
<dbReference type="EnsemblProtists" id="EAL69150">
    <property type="protein sequence ID" value="EAL69150"/>
    <property type="gene ID" value="DDB_G0276587"/>
</dbReference>
<dbReference type="GeneID" id="8620581"/>
<dbReference type="KEGG" id="ddi:DDB_G0276587"/>
<dbReference type="dictyBase" id="DDB_G0276587">
    <property type="gene designation" value="hspG4"/>
</dbReference>
<dbReference type="VEuPathDB" id="AmoebaDB:DDB_G0276587"/>
<dbReference type="eggNOG" id="KOG0710">
    <property type="taxonomic scope" value="Eukaryota"/>
</dbReference>
<dbReference type="HOGENOM" id="CLU_1328489_0_0_1"/>
<dbReference type="InParanoid" id="Q551G1"/>
<dbReference type="OMA" id="GCKRQYS"/>
<dbReference type="PhylomeDB" id="Q551G1"/>
<dbReference type="PRO" id="PR:Q551G1"/>
<dbReference type="Proteomes" id="UP000002195">
    <property type="component" value="Chromosome 2"/>
</dbReference>
<dbReference type="CDD" id="cd06464">
    <property type="entry name" value="ACD_sHsps-like"/>
    <property type="match status" value="1"/>
</dbReference>
<dbReference type="Gene3D" id="2.60.40.790">
    <property type="match status" value="1"/>
</dbReference>
<dbReference type="InterPro" id="IPR002068">
    <property type="entry name" value="A-crystallin/Hsp20_dom"/>
</dbReference>
<dbReference type="InterPro" id="IPR008978">
    <property type="entry name" value="HSP20-like_chaperone"/>
</dbReference>
<dbReference type="InterPro" id="IPR051779">
    <property type="entry name" value="HspG1-11-like"/>
</dbReference>
<dbReference type="PANTHER" id="PTHR46827">
    <property type="entry name" value="HEAT SHOCK PROTEIN DDB_G0288861-RELATED"/>
    <property type="match status" value="1"/>
</dbReference>
<dbReference type="PANTHER" id="PTHR46827:SF1">
    <property type="entry name" value="HEAT SHOCK PROTEIN DDB_G0288861-RELATED"/>
    <property type="match status" value="1"/>
</dbReference>
<dbReference type="Pfam" id="PF00011">
    <property type="entry name" value="HSP20"/>
    <property type="match status" value="1"/>
</dbReference>
<dbReference type="SUPFAM" id="SSF49764">
    <property type="entry name" value="HSP20-like chaperones"/>
    <property type="match status" value="1"/>
</dbReference>
<dbReference type="PROSITE" id="PS01031">
    <property type="entry name" value="SHSP"/>
    <property type="match status" value="1"/>
</dbReference>
<feature type="chain" id="PRO_0000363896" description="Small heat shock protein hspG4">
    <location>
        <begin position="1"/>
        <end position="199"/>
    </location>
</feature>
<feature type="domain" description="sHSP" evidence="1">
    <location>
        <begin position="30"/>
        <end position="199"/>
    </location>
</feature>
<feature type="region of interest" description="Disordered" evidence="2">
    <location>
        <begin position="83"/>
        <end position="105"/>
    </location>
</feature>
<reference key="1">
    <citation type="journal article" date="2002" name="Nature">
        <title>Sequence and analysis of chromosome 2 of Dictyostelium discoideum.</title>
        <authorList>
            <person name="Gloeckner G."/>
            <person name="Eichinger L."/>
            <person name="Szafranski K."/>
            <person name="Pachebat J.A."/>
            <person name="Bankier A.T."/>
            <person name="Dear P.H."/>
            <person name="Lehmann R."/>
            <person name="Baumgart C."/>
            <person name="Parra G."/>
            <person name="Abril J.F."/>
            <person name="Guigo R."/>
            <person name="Kumpf K."/>
            <person name="Tunggal B."/>
            <person name="Cox E.C."/>
            <person name="Quail M.A."/>
            <person name="Platzer M."/>
            <person name="Rosenthal A."/>
            <person name="Noegel A.A."/>
        </authorList>
    </citation>
    <scope>NUCLEOTIDE SEQUENCE [LARGE SCALE GENOMIC DNA]</scope>
    <source>
        <strain>AX4</strain>
    </source>
</reference>
<reference key="2">
    <citation type="journal article" date="2005" name="Nature">
        <title>The genome of the social amoeba Dictyostelium discoideum.</title>
        <authorList>
            <person name="Eichinger L."/>
            <person name="Pachebat J.A."/>
            <person name="Gloeckner G."/>
            <person name="Rajandream M.A."/>
            <person name="Sucgang R."/>
            <person name="Berriman M."/>
            <person name="Song J."/>
            <person name="Olsen R."/>
            <person name="Szafranski K."/>
            <person name="Xu Q."/>
            <person name="Tunggal B."/>
            <person name="Kummerfeld S."/>
            <person name="Madera M."/>
            <person name="Konfortov B.A."/>
            <person name="Rivero F."/>
            <person name="Bankier A.T."/>
            <person name="Lehmann R."/>
            <person name="Hamlin N."/>
            <person name="Davies R."/>
            <person name="Gaudet P."/>
            <person name="Fey P."/>
            <person name="Pilcher K."/>
            <person name="Chen G."/>
            <person name="Saunders D."/>
            <person name="Sodergren E.J."/>
            <person name="Davis P."/>
            <person name="Kerhornou A."/>
            <person name="Nie X."/>
            <person name="Hall N."/>
            <person name="Anjard C."/>
            <person name="Hemphill L."/>
            <person name="Bason N."/>
            <person name="Farbrother P."/>
            <person name="Desany B."/>
            <person name="Just E."/>
            <person name="Morio T."/>
            <person name="Rost R."/>
            <person name="Churcher C.M."/>
            <person name="Cooper J."/>
            <person name="Haydock S."/>
            <person name="van Driessche N."/>
            <person name="Cronin A."/>
            <person name="Goodhead I."/>
            <person name="Muzny D.M."/>
            <person name="Mourier T."/>
            <person name="Pain A."/>
            <person name="Lu M."/>
            <person name="Harper D."/>
            <person name="Lindsay R."/>
            <person name="Hauser H."/>
            <person name="James K.D."/>
            <person name="Quiles M."/>
            <person name="Madan Babu M."/>
            <person name="Saito T."/>
            <person name="Buchrieser C."/>
            <person name="Wardroper A."/>
            <person name="Felder M."/>
            <person name="Thangavelu M."/>
            <person name="Johnson D."/>
            <person name="Knights A."/>
            <person name="Loulseged H."/>
            <person name="Mungall K.L."/>
            <person name="Oliver K."/>
            <person name="Price C."/>
            <person name="Quail M.A."/>
            <person name="Urushihara H."/>
            <person name="Hernandez J."/>
            <person name="Rabbinowitsch E."/>
            <person name="Steffen D."/>
            <person name="Sanders M."/>
            <person name="Ma J."/>
            <person name="Kohara Y."/>
            <person name="Sharp S."/>
            <person name="Simmonds M.N."/>
            <person name="Spiegler S."/>
            <person name="Tivey A."/>
            <person name="Sugano S."/>
            <person name="White B."/>
            <person name="Walker D."/>
            <person name="Woodward J.R."/>
            <person name="Winckler T."/>
            <person name="Tanaka Y."/>
            <person name="Shaulsky G."/>
            <person name="Schleicher M."/>
            <person name="Weinstock G.M."/>
            <person name="Rosenthal A."/>
            <person name="Cox E.C."/>
            <person name="Chisholm R.L."/>
            <person name="Gibbs R.A."/>
            <person name="Loomis W.F."/>
            <person name="Platzer M."/>
            <person name="Kay R.R."/>
            <person name="Williams J.G."/>
            <person name="Dear P.H."/>
            <person name="Noegel A.A."/>
            <person name="Barrell B.G."/>
            <person name="Kuspa A."/>
        </authorList>
    </citation>
    <scope>NUCLEOTIDE SEQUENCE [LARGE SCALE GENOMIC DNA]</scope>
    <source>
        <strain>AX4</strain>
    </source>
</reference>
<gene>
    <name type="primary">hspG4</name>
    <name type="ORF">DDB_G0276587</name>
</gene>
<organism>
    <name type="scientific">Dictyostelium discoideum</name>
    <name type="common">Social amoeba</name>
    <dbReference type="NCBI Taxonomy" id="44689"/>
    <lineage>
        <taxon>Eukaryota</taxon>
        <taxon>Amoebozoa</taxon>
        <taxon>Evosea</taxon>
        <taxon>Eumycetozoa</taxon>
        <taxon>Dictyostelia</taxon>
        <taxon>Dictyosteliales</taxon>
        <taxon>Dictyosteliaceae</taxon>
        <taxon>Dictyostelium</taxon>
    </lineage>
</organism>
<name>HSPG4_DICDI</name>
<accession>Q551G1</accession>
<sequence>MTTLFDILNTLNNNNNNNNYTGCKRQYSINKRVDIIPSMDVTLTNDKLIIETELTGVSKNDIDINIKDSILIIQGEKKKSIIKNQQQQQQQQQLENSNNKENDEPSIEEFEEDVKSKSELNKTTLNTTENKDEDKTTQNINKEFISERSFGNFKRYLNLSEILYQLDLNSIDTQFENGLLTITIKKKFDSSNTIKININ</sequence>
<evidence type="ECO:0000255" key="1">
    <source>
        <dbReference type="PROSITE-ProRule" id="PRU00285"/>
    </source>
</evidence>
<evidence type="ECO:0000256" key="2">
    <source>
        <dbReference type="SAM" id="MobiDB-lite"/>
    </source>
</evidence>
<protein>
    <recommendedName>
        <fullName>Small heat shock protein hspG4</fullName>
    </recommendedName>
</protein>
<keyword id="KW-1185">Reference proteome</keyword>
<keyword id="KW-0346">Stress response</keyword>